<accession>Q927U4</accession>
<protein>
    <recommendedName>
        <fullName>Cell wall teichoic acid glycosylation protein GtcA</fullName>
    </recommendedName>
</protein>
<sequence>MSRVRQLLDKLPWYTDNIHSILMYLIMGGFTTLINIVTFWLCTDVLNWDYRIANTIAWVASVLFAYFSNKKYVFESYTPTWKEKAREVSSFFGFRFLTYIVDFLVMILLISGLGINELWAKIWTNVIVLILNYVFSKWIIFKVRK</sequence>
<proteinExistence type="inferred from homology"/>
<name>GTCA_LISIN</name>
<organism>
    <name type="scientific">Listeria innocua serovar 6a (strain ATCC BAA-680 / CLIP 11262)</name>
    <dbReference type="NCBI Taxonomy" id="272626"/>
    <lineage>
        <taxon>Bacteria</taxon>
        <taxon>Bacillati</taxon>
        <taxon>Bacillota</taxon>
        <taxon>Bacilli</taxon>
        <taxon>Bacillales</taxon>
        <taxon>Listeriaceae</taxon>
        <taxon>Listeria</taxon>
    </lineage>
</organism>
<reference key="1">
    <citation type="journal article" date="2001" name="Science">
        <title>Comparative genomics of Listeria species.</title>
        <authorList>
            <person name="Glaser P."/>
            <person name="Frangeul L."/>
            <person name="Buchrieser C."/>
            <person name="Rusniok C."/>
            <person name="Amend A."/>
            <person name="Baquero F."/>
            <person name="Berche P."/>
            <person name="Bloecker H."/>
            <person name="Brandt P."/>
            <person name="Chakraborty T."/>
            <person name="Charbit A."/>
            <person name="Chetouani F."/>
            <person name="Couve E."/>
            <person name="de Daruvar A."/>
            <person name="Dehoux P."/>
            <person name="Domann E."/>
            <person name="Dominguez-Bernal G."/>
            <person name="Duchaud E."/>
            <person name="Durant L."/>
            <person name="Dussurget O."/>
            <person name="Entian K.-D."/>
            <person name="Fsihi H."/>
            <person name="Garcia-del Portillo F."/>
            <person name="Garrido P."/>
            <person name="Gautier L."/>
            <person name="Goebel W."/>
            <person name="Gomez-Lopez N."/>
            <person name="Hain T."/>
            <person name="Hauf J."/>
            <person name="Jackson D."/>
            <person name="Jones L.-M."/>
            <person name="Kaerst U."/>
            <person name="Kreft J."/>
            <person name="Kuhn M."/>
            <person name="Kunst F."/>
            <person name="Kurapkat G."/>
            <person name="Madueno E."/>
            <person name="Maitournam A."/>
            <person name="Mata Vicente J."/>
            <person name="Ng E."/>
            <person name="Nedjari H."/>
            <person name="Nordsiek G."/>
            <person name="Novella S."/>
            <person name="de Pablos B."/>
            <person name="Perez-Diaz J.-C."/>
            <person name="Purcell R."/>
            <person name="Remmel B."/>
            <person name="Rose M."/>
            <person name="Schlueter T."/>
            <person name="Simoes N."/>
            <person name="Tierrez A."/>
            <person name="Vazquez-Boland J.-A."/>
            <person name="Voss H."/>
            <person name="Wehland J."/>
            <person name="Cossart P."/>
        </authorList>
    </citation>
    <scope>NUCLEOTIDE SEQUENCE [LARGE SCALE GENOMIC DNA]</scope>
    <source>
        <strain>ATCC BAA-680 / CLIP 11262</strain>
    </source>
</reference>
<feature type="chain" id="PRO_0000212253" description="Cell wall teichoic acid glycosylation protein GtcA">
    <location>
        <begin position="1"/>
        <end position="145"/>
    </location>
</feature>
<feature type="transmembrane region" description="Helical" evidence="2">
    <location>
        <begin position="21"/>
        <end position="41"/>
    </location>
</feature>
<feature type="transmembrane region" description="Helical" evidence="2">
    <location>
        <begin position="52"/>
        <end position="69"/>
    </location>
</feature>
<feature type="transmembrane region" description="Helical" evidence="2">
    <location>
        <begin position="96"/>
        <end position="116"/>
    </location>
</feature>
<feature type="transmembrane region" description="Helical" evidence="2">
    <location>
        <begin position="121"/>
        <end position="141"/>
    </location>
</feature>
<evidence type="ECO:0000250" key="1"/>
<evidence type="ECO:0000255" key="2"/>
<evidence type="ECO:0000305" key="3"/>
<keyword id="KW-1003">Cell membrane</keyword>
<keyword id="KW-0472">Membrane</keyword>
<keyword id="KW-0812">Transmembrane</keyword>
<keyword id="KW-1133">Transmembrane helix</keyword>
<keyword id="KW-0813">Transport</keyword>
<comment type="function">
    <text evidence="1">Involved in the decoration of cell wall teichoic acid with galactose and glucose.</text>
</comment>
<comment type="subcellular location">
    <subcellularLocation>
        <location evidence="3">Cell membrane</location>
        <topology evidence="3">Multi-pass membrane protein</topology>
    </subcellularLocation>
</comment>
<comment type="similarity">
    <text evidence="3">Belongs to the GtrA family.</text>
</comment>
<dbReference type="EMBL" id="AL596173">
    <property type="protein sequence ID" value="CAC97920.1"/>
    <property type="molecule type" value="Genomic_DNA"/>
</dbReference>
<dbReference type="PIR" id="AH1768">
    <property type="entry name" value="AH1768"/>
</dbReference>
<dbReference type="RefSeq" id="WP_010991334.1">
    <property type="nucleotide sequence ID" value="NC_003212.1"/>
</dbReference>
<dbReference type="SMR" id="Q927U4"/>
<dbReference type="STRING" id="272626.gene:17567074"/>
<dbReference type="GeneID" id="93235958"/>
<dbReference type="KEGG" id="lin:gtcA"/>
<dbReference type="eggNOG" id="COG2246">
    <property type="taxonomic scope" value="Bacteria"/>
</dbReference>
<dbReference type="HOGENOM" id="CLU_083873_1_1_9"/>
<dbReference type="OrthoDB" id="361483at2"/>
<dbReference type="Proteomes" id="UP000002513">
    <property type="component" value="Chromosome"/>
</dbReference>
<dbReference type="GO" id="GO:0005886">
    <property type="term" value="C:plasma membrane"/>
    <property type="evidence" value="ECO:0007669"/>
    <property type="project" value="UniProtKB-SubCell"/>
</dbReference>
<dbReference type="GO" id="GO:0000271">
    <property type="term" value="P:polysaccharide biosynthetic process"/>
    <property type="evidence" value="ECO:0007669"/>
    <property type="project" value="InterPro"/>
</dbReference>
<dbReference type="InterPro" id="IPR051401">
    <property type="entry name" value="GtrA_CellWall_Glycosyl"/>
</dbReference>
<dbReference type="InterPro" id="IPR007267">
    <property type="entry name" value="GtrA_DPMS_TM"/>
</dbReference>
<dbReference type="PANTHER" id="PTHR38459:SF5">
    <property type="entry name" value="CELL WALL TEICHOIC ACID GLYCOSYLATION PROTEIN GTCA"/>
    <property type="match status" value="1"/>
</dbReference>
<dbReference type="PANTHER" id="PTHR38459">
    <property type="entry name" value="PROPHAGE BACTOPRENOL-LINKED GLUCOSE TRANSLOCASE HOMOLOG"/>
    <property type="match status" value="1"/>
</dbReference>
<dbReference type="Pfam" id="PF04138">
    <property type="entry name" value="GtrA_DPMS_TM"/>
    <property type="match status" value="1"/>
</dbReference>
<gene>
    <name type="primary">gtcA</name>
    <name type="ordered locus">lin2694</name>
</gene>